<accession>Q54LW3</accession>
<keyword id="KW-1185">Reference proteome</keyword>
<protein>
    <recommendedName>
        <fullName>Uncharacterized protein DDB_G0286379</fullName>
    </recommendedName>
</protein>
<gene>
    <name type="ORF">DDB_G0286379</name>
</gene>
<name>Y6939_DICDI</name>
<sequence length="374" mass="41331">METKYHEYDDVQTKDTPSNKYSLNENRGDLIFLIMEIIGESCNSIYDSFTLDAPQFAFRGIDKTLSKDGEIGKLITIIKNLIKEQSYLLKSPMTNNNNNNNNNNNNNNNNNNNNNNNNNNNNNNNNNNNNNNNNNSYNNNNINDNNNSSNNNNNNLEYNTKGGEYISSNQSSPLSIYSTPPNPSSYVSSPLNQPANNTEAFQINGNELDAAQIKIKQLELELQKFKEAGALFAMNKINNSSAPPPPPKACAPPPPPPPPPPITVVKQPSFLMKKGVNNNNNNNNNNNSSNTNDSNNTNNTKPQPTFNFADVLLNRPQLKRVSKDRSPGGTPAKEPKNKSGSVEDALLKAIVSKFKHANSSPVKSHDDSSDSDFE</sequence>
<proteinExistence type="predicted"/>
<feature type="chain" id="PRO_0000348506" description="Uncharacterized protein DDB_G0286379">
    <location>
        <begin position="1"/>
        <end position="374"/>
    </location>
</feature>
<feature type="region of interest" description="Disordered" evidence="1">
    <location>
        <begin position="1"/>
        <end position="20"/>
    </location>
</feature>
<feature type="region of interest" description="Disordered" evidence="1">
    <location>
        <begin position="91"/>
        <end position="193"/>
    </location>
</feature>
<feature type="region of interest" description="Disordered" evidence="1">
    <location>
        <begin position="236"/>
        <end position="374"/>
    </location>
</feature>
<feature type="compositionally biased region" description="Basic and acidic residues" evidence="1">
    <location>
        <begin position="1"/>
        <end position="13"/>
    </location>
</feature>
<feature type="compositionally biased region" description="Low complexity" evidence="1">
    <location>
        <begin position="95"/>
        <end position="155"/>
    </location>
</feature>
<feature type="compositionally biased region" description="Polar residues" evidence="1">
    <location>
        <begin position="166"/>
        <end position="193"/>
    </location>
</feature>
<feature type="compositionally biased region" description="Pro residues" evidence="1">
    <location>
        <begin position="242"/>
        <end position="262"/>
    </location>
</feature>
<feature type="compositionally biased region" description="Low complexity" evidence="1">
    <location>
        <begin position="277"/>
        <end position="300"/>
    </location>
</feature>
<dbReference type="EMBL" id="AAFI02000085">
    <property type="protein sequence ID" value="EAL64214.1"/>
    <property type="molecule type" value="Genomic_DNA"/>
</dbReference>
<dbReference type="RefSeq" id="XP_637717.1">
    <property type="nucleotide sequence ID" value="XM_632625.1"/>
</dbReference>
<dbReference type="FunCoup" id="Q54LW3">
    <property type="interactions" value="877"/>
</dbReference>
<dbReference type="GlyGen" id="Q54LW3">
    <property type="glycosylation" value="1 site"/>
</dbReference>
<dbReference type="PaxDb" id="44689-DDB0186939"/>
<dbReference type="EnsemblProtists" id="EAL64214">
    <property type="protein sequence ID" value="EAL64214"/>
    <property type="gene ID" value="DDB_G0286379"/>
</dbReference>
<dbReference type="GeneID" id="8625582"/>
<dbReference type="KEGG" id="ddi:DDB_G0286379"/>
<dbReference type="dictyBase" id="DDB_G0286379"/>
<dbReference type="VEuPathDB" id="AmoebaDB:DDB_G0286379"/>
<dbReference type="eggNOG" id="ENOG502RSRW">
    <property type="taxonomic scope" value="Eukaryota"/>
</dbReference>
<dbReference type="HOGENOM" id="CLU_740649_0_0_1"/>
<dbReference type="InParanoid" id="Q54LW3"/>
<dbReference type="PRO" id="PR:Q54LW3"/>
<dbReference type="Proteomes" id="UP000002195">
    <property type="component" value="Chromosome 4"/>
</dbReference>
<dbReference type="InterPro" id="IPR007972">
    <property type="entry name" value="Mtfr1"/>
</dbReference>
<dbReference type="PANTHER" id="PTHR14215">
    <property type="entry name" value="PROTEIN OF UNKNOWN FUNCTION DUF729"/>
    <property type="match status" value="1"/>
</dbReference>
<dbReference type="PANTHER" id="PTHR14215:SF0">
    <property type="entry name" value="WH2 DOMAIN-CONTAINING PROTEIN"/>
    <property type="match status" value="1"/>
</dbReference>
<reference key="1">
    <citation type="journal article" date="2005" name="Nature">
        <title>The genome of the social amoeba Dictyostelium discoideum.</title>
        <authorList>
            <person name="Eichinger L."/>
            <person name="Pachebat J.A."/>
            <person name="Gloeckner G."/>
            <person name="Rajandream M.A."/>
            <person name="Sucgang R."/>
            <person name="Berriman M."/>
            <person name="Song J."/>
            <person name="Olsen R."/>
            <person name="Szafranski K."/>
            <person name="Xu Q."/>
            <person name="Tunggal B."/>
            <person name="Kummerfeld S."/>
            <person name="Madera M."/>
            <person name="Konfortov B.A."/>
            <person name="Rivero F."/>
            <person name="Bankier A.T."/>
            <person name="Lehmann R."/>
            <person name="Hamlin N."/>
            <person name="Davies R."/>
            <person name="Gaudet P."/>
            <person name="Fey P."/>
            <person name="Pilcher K."/>
            <person name="Chen G."/>
            <person name="Saunders D."/>
            <person name="Sodergren E.J."/>
            <person name="Davis P."/>
            <person name="Kerhornou A."/>
            <person name="Nie X."/>
            <person name="Hall N."/>
            <person name="Anjard C."/>
            <person name="Hemphill L."/>
            <person name="Bason N."/>
            <person name="Farbrother P."/>
            <person name="Desany B."/>
            <person name="Just E."/>
            <person name="Morio T."/>
            <person name="Rost R."/>
            <person name="Churcher C.M."/>
            <person name="Cooper J."/>
            <person name="Haydock S."/>
            <person name="van Driessche N."/>
            <person name="Cronin A."/>
            <person name="Goodhead I."/>
            <person name="Muzny D.M."/>
            <person name="Mourier T."/>
            <person name="Pain A."/>
            <person name="Lu M."/>
            <person name="Harper D."/>
            <person name="Lindsay R."/>
            <person name="Hauser H."/>
            <person name="James K.D."/>
            <person name="Quiles M."/>
            <person name="Madan Babu M."/>
            <person name="Saito T."/>
            <person name="Buchrieser C."/>
            <person name="Wardroper A."/>
            <person name="Felder M."/>
            <person name="Thangavelu M."/>
            <person name="Johnson D."/>
            <person name="Knights A."/>
            <person name="Loulseged H."/>
            <person name="Mungall K.L."/>
            <person name="Oliver K."/>
            <person name="Price C."/>
            <person name="Quail M.A."/>
            <person name="Urushihara H."/>
            <person name="Hernandez J."/>
            <person name="Rabbinowitsch E."/>
            <person name="Steffen D."/>
            <person name="Sanders M."/>
            <person name="Ma J."/>
            <person name="Kohara Y."/>
            <person name="Sharp S."/>
            <person name="Simmonds M.N."/>
            <person name="Spiegler S."/>
            <person name="Tivey A."/>
            <person name="Sugano S."/>
            <person name="White B."/>
            <person name="Walker D."/>
            <person name="Woodward J.R."/>
            <person name="Winckler T."/>
            <person name="Tanaka Y."/>
            <person name="Shaulsky G."/>
            <person name="Schleicher M."/>
            <person name="Weinstock G.M."/>
            <person name="Rosenthal A."/>
            <person name="Cox E.C."/>
            <person name="Chisholm R.L."/>
            <person name="Gibbs R.A."/>
            <person name="Loomis W.F."/>
            <person name="Platzer M."/>
            <person name="Kay R.R."/>
            <person name="Williams J.G."/>
            <person name="Dear P.H."/>
            <person name="Noegel A.A."/>
            <person name="Barrell B.G."/>
            <person name="Kuspa A."/>
        </authorList>
    </citation>
    <scope>NUCLEOTIDE SEQUENCE [LARGE SCALE GENOMIC DNA]</scope>
    <source>
        <strain>AX4</strain>
    </source>
</reference>
<evidence type="ECO:0000256" key="1">
    <source>
        <dbReference type="SAM" id="MobiDB-lite"/>
    </source>
</evidence>
<organism>
    <name type="scientific">Dictyostelium discoideum</name>
    <name type="common">Social amoeba</name>
    <dbReference type="NCBI Taxonomy" id="44689"/>
    <lineage>
        <taxon>Eukaryota</taxon>
        <taxon>Amoebozoa</taxon>
        <taxon>Evosea</taxon>
        <taxon>Eumycetozoa</taxon>
        <taxon>Dictyostelia</taxon>
        <taxon>Dictyosteliales</taxon>
        <taxon>Dictyosteliaceae</taxon>
        <taxon>Dictyostelium</taxon>
    </lineage>
</organism>